<keyword id="KW-0678">Repressor</keyword>
<keyword id="KW-0346">Stress response</keyword>
<keyword id="KW-0804">Transcription</keyword>
<keyword id="KW-0805">Transcription regulation</keyword>
<protein>
    <recommendedName>
        <fullName evidence="1">Heat-inducible transcription repressor HrcA</fullName>
    </recommendedName>
</protein>
<comment type="function">
    <text evidence="1">Negative regulator of class I heat shock genes (grpE-dnaK-dnaJ and groELS operons). Prevents heat-shock induction of these operons.</text>
</comment>
<comment type="similarity">
    <text evidence="1">Belongs to the HrcA family.</text>
</comment>
<name>HRCA_BACCN</name>
<evidence type="ECO:0000255" key="1">
    <source>
        <dbReference type="HAMAP-Rule" id="MF_00081"/>
    </source>
</evidence>
<feature type="chain" id="PRO_1000075279" description="Heat-inducible transcription repressor HrcA">
    <location>
        <begin position="1"/>
        <end position="343"/>
    </location>
</feature>
<gene>
    <name evidence="1" type="primary">hrcA</name>
    <name type="ordered locus">Bcer98_3042</name>
</gene>
<reference key="1">
    <citation type="journal article" date="2008" name="Chem. Biol. Interact.">
        <title>Extending the Bacillus cereus group genomics to putative food-borne pathogens of different toxicity.</title>
        <authorList>
            <person name="Lapidus A."/>
            <person name="Goltsman E."/>
            <person name="Auger S."/>
            <person name="Galleron N."/>
            <person name="Segurens B."/>
            <person name="Dossat C."/>
            <person name="Land M.L."/>
            <person name="Broussolle V."/>
            <person name="Brillard J."/>
            <person name="Guinebretiere M.-H."/>
            <person name="Sanchis V."/>
            <person name="Nguen-the C."/>
            <person name="Lereclus D."/>
            <person name="Richardson P."/>
            <person name="Wincker P."/>
            <person name="Weissenbach J."/>
            <person name="Ehrlich S.D."/>
            <person name="Sorokin A."/>
        </authorList>
    </citation>
    <scope>NUCLEOTIDE SEQUENCE [LARGE SCALE GENOMIC DNA]</scope>
    <source>
        <strain>DSM 22905 / CIP 110041 / 391-98 / NVH 391-98</strain>
    </source>
</reference>
<proteinExistence type="inferred from homology"/>
<dbReference type="EMBL" id="CP000764">
    <property type="protein sequence ID" value="ABS23268.1"/>
    <property type="molecule type" value="Genomic_DNA"/>
</dbReference>
<dbReference type="RefSeq" id="WP_012095505.1">
    <property type="nucleotide sequence ID" value="NC_009674.1"/>
</dbReference>
<dbReference type="SMR" id="A7GT10"/>
<dbReference type="STRING" id="315749.Bcer98_3042"/>
<dbReference type="GeneID" id="33898288"/>
<dbReference type="KEGG" id="bcy:Bcer98_3042"/>
<dbReference type="eggNOG" id="COG1420">
    <property type="taxonomic scope" value="Bacteria"/>
</dbReference>
<dbReference type="HOGENOM" id="CLU_050019_1_0_9"/>
<dbReference type="OrthoDB" id="9783139at2"/>
<dbReference type="Proteomes" id="UP000002300">
    <property type="component" value="Chromosome"/>
</dbReference>
<dbReference type="GO" id="GO:0003677">
    <property type="term" value="F:DNA binding"/>
    <property type="evidence" value="ECO:0007669"/>
    <property type="project" value="InterPro"/>
</dbReference>
<dbReference type="GO" id="GO:0045892">
    <property type="term" value="P:negative regulation of DNA-templated transcription"/>
    <property type="evidence" value="ECO:0007669"/>
    <property type="project" value="UniProtKB-UniRule"/>
</dbReference>
<dbReference type="FunFam" id="1.10.10.10:FF:000049">
    <property type="entry name" value="Heat-inducible transcription repressor HrcA"/>
    <property type="match status" value="1"/>
</dbReference>
<dbReference type="FunFam" id="3.30.390.60:FF:000001">
    <property type="entry name" value="Heat-inducible transcription repressor HrcA"/>
    <property type="match status" value="1"/>
</dbReference>
<dbReference type="Gene3D" id="3.30.450.40">
    <property type="match status" value="1"/>
</dbReference>
<dbReference type="Gene3D" id="3.30.390.60">
    <property type="entry name" value="Heat-inducible transcription repressor hrca homolog, domain 3"/>
    <property type="match status" value="1"/>
</dbReference>
<dbReference type="Gene3D" id="1.10.10.10">
    <property type="entry name" value="Winged helix-like DNA-binding domain superfamily/Winged helix DNA-binding domain"/>
    <property type="match status" value="1"/>
</dbReference>
<dbReference type="HAMAP" id="MF_00081">
    <property type="entry name" value="HrcA"/>
    <property type="match status" value="1"/>
</dbReference>
<dbReference type="InterPro" id="IPR029016">
    <property type="entry name" value="GAF-like_dom_sf"/>
</dbReference>
<dbReference type="InterPro" id="IPR002571">
    <property type="entry name" value="HrcA"/>
</dbReference>
<dbReference type="InterPro" id="IPR021153">
    <property type="entry name" value="HrcA_C"/>
</dbReference>
<dbReference type="InterPro" id="IPR036388">
    <property type="entry name" value="WH-like_DNA-bd_sf"/>
</dbReference>
<dbReference type="InterPro" id="IPR036390">
    <property type="entry name" value="WH_DNA-bd_sf"/>
</dbReference>
<dbReference type="InterPro" id="IPR023120">
    <property type="entry name" value="WHTH_transcript_rep_HrcA_IDD"/>
</dbReference>
<dbReference type="NCBIfam" id="TIGR00331">
    <property type="entry name" value="hrcA"/>
    <property type="match status" value="1"/>
</dbReference>
<dbReference type="PANTHER" id="PTHR34824">
    <property type="entry name" value="HEAT-INDUCIBLE TRANSCRIPTION REPRESSOR HRCA"/>
    <property type="match status" value="1"/>
</dbReference>
<dbReference type="PANTHER" id="PTHR34824:SF1">
    <property type="entry name" value="HEAT-INDUCIBLE TRANSCRIPTION REPRESSOR HRCA"/>
    <property type="match status" value="1"/>
</dbReference>
<dbReference type="Pfam" id="PF01628">
    <property type="entry name" value="HrcA"/>
    <property type="match status" value="1"/>
</dbReference>
<dbReference type="PIRSF" id="PIRSF005485">
    <property type="entry name" value="HrcA"/>
    <property type="match status" value="1"/>
</dbReference>
<dbReference type="SUPFAM" id="SSF55781">
    <property type="entry name" value="GAF domain-like"/>
    <property type="match status" value="1"/>
</dbReference>
<dbReference type="SUPFAM" id="SSF46785">
    <property type="entry name" value="Winged helix' DNA-binding domain"/>
    <property type="match status" value="1"/>
</dbReference>
<sequence>MLTERQLLILQTIIDDFIGSAQPVGSRTLAKKDEITFSSATIRNEMADLEELGFIEKTHSSSGRIPSEKGYRFYVDHLLAPQRLSAEEIVQIKDLFAERIFEAEKVAQQSAQILSELTNYTAIVLGPKLSTNKLKNVQIIPLGRKTAVAIIVTDTGHVQSKTITVPESVDLSDLEKMVNILNEKLFGVPMVELHNKIVKEVVTVLHKYVHNYDSAMKILDGTFQVPLSEKIYFGGKANMLAQPEFHDIQKVRSLLEMIDNEAEFYDILRKKQVGIQVNIGRENSSMAMEDCSLISATYSVGEEQLGTIAILGPTRMHYARVITLLQLFTKHFTEGLNGLYKSK</sequence>
<organism>
    <name type="scientific">Bacillus cytotoxicus (strain DSM 22905 / CIP 110041 / 391-98 / NVH 391-98)</name>
    <dbReference type="NCBI Taxonomy" id="315749"/>
    <lineage>
        <taxon>Bacteria</taxon>
        <taxon>Bacillati</taxon>
        <taxon>Bacillota</taxon>
        <taxon>Bacilli</taxon>
        <taxon>Bacillales</taxon>
        <taxon>Bacillaceae</taxon>
        <taxon>Bacillus</taxon>
        <taxon>Bacillus cereus group</taxon>
    </lineage>
</organism>
<accession>A7GT10</accession>